<keyword id="KW-0119">Carbohydrate metabolism</keyword>
<keyword id="KW-0328">Glycosyltransferase</keyword>
<keyword id="KW-0614">Plasmid</keyword>
<keyword id="KW-1185">Reference proteome</keyword>
<keyword id="KW-0808">Transferase</keyword>
<evidence type="ECO:0000250" key="1">
    <source>
        <dbReference type="UniProtKB" id="P05655"/>
    </source>
</evidence>
<evidence type="ECO:0000269" key="2">
    <source>
    </source>
</evidence>
<evidence type="ECO:0000303" key="3">
    <source>
    </source>
</evidence>
<evidence type="ECO:0000305" key="4"/>
<evidence type="ECO:0000312" key="5">
    <source>
        <dbReference type="EMBL" id="AEX54742.1"/>
    </source>
</evidence>
<dbReference type="EC" id="2.4.1.10" evidence="2"/>
<dbReference type="EMBL" id="U91484">
    <property type="protein sequence ID" value="AAC36458.1"/>
    <property type="molecule type" value="Genomic_DNA"/>
</dbReference>
<dbReference type="EMBL" id="CP003246">
    <property type="protein sequence ID" value="AEX54742.1"/>
    <property type="molecule type" value="Genomic_DNA"/>
</dbReference>
<dbReference type="RefSeq" id="WP_014333851.1">
    <property type="nucleotide sequence ID" value="NC_016819.1"/>
</dbReference>
<dbReference type="SMR" id="O54435"/>
<dbReference type="CAZy" id="GH68">
    <property type="family name" value="Glycoside Hydrolase Family 68"/>
</dbReference>
<dbReference type="KEGG" id="raq:Rahaq2_5035"/>
<dbReference type="PATRIC" id="fig|745277.3.peg.4810"/>
<dbReference type="eggNOG" id="COG1621">
    <property type="taxonomic scope" value="Bacteria"/>
</dbReference>
<dbReference type="HOGENOM" id="CLU_031862_1_0_6"/>
<dbReference type="OrthoDB" id="3359526at2"/>
<dbReference type="BRENDA" id="2.4.1.10">
    <property type="organism ID" value="5269"/>
</dbReference>
<dbReference type="Proteomes" id="UP000009010">
    <property type="component" value="Plasmid pRahaq202"/>
</dbReference>
<dbReference type="GO" id="GO:0050053">
    <property type="term" value="F:levansucrase activity"/>
    <property type="evidence" value="ECO:0007669"/>
    <property type="project" value="UniProtKB-EC"/>
</dbReference>
<dbReference type="GO" id="GO:0009758">
    <property type="term" value="P:carbohydrate utilization"/>
    <property type="evidence" value="ECO:0007669"/>
    <property type="project" value="InterPro"/>
</dbReference>
<dbReference type="CDD" id="cd08997">
    <property type="entry name" value="GH68"/>
    <property type="match status" value="1"/>
</dbReference>
<dbReference type="Gene3D" id="2.115.10.20">
    <property type="entry name" value="Glycosyl hydrolase domain, family 43"/>
    <property type="match status" value="1"/>
</dbReference>
<dbReference type="InterPro" id="IPR003469">
    <property type="entry name" value="Glyco_hydro_68"/>
</dbReference>
<dbReference type="InterPro" id="IPR023296">
    <property type="entry name" value="Glyco_hydro_beta-prop_sf"/>
</dbReference>
<dbReference type="Pfam" id="PF02435">
    <property type="entry name" value="Glyco_hydro_68"/>
    <property type="match status" value="1"/>
</dbReference>
<dbReference type="SUPFAM" id="SSF75005">
    <property type="entry name" value="Arabinanase/levansucrase/invertase"/>
    <property type="match status" value="1"/>
</dbReference>
<organism>
    <name type="scientific">Rahnella aquatilis (strain ATCC 33071 / DSM 4594 / JCM 1683 / NBRC 105701 / NCIMB 13365 / CIP 78.65)</name>
    <dbReference type="NCBI Taxonomy" id="745277"/>
    <lineage>
        <taxon>Bacteria</taxon>
        <taxon>Pseudomonadati</taxon>
        <taxon>Pseudomonadota</taxon>
        <taxon>Gammaproteobacteria</taxon>
        <taxon>Enterobacterales</taxon>
        <taxon>Yersiniaceae</taxon>
        <taxon>Rahnella</taxon>
    </lineage>
</organism>
<feature type="chain" id="PRO_0000057720" description="Levansucrase">
    <location>
        <begin position="1"/>
        <end position="415"/>
    </location>
</feature>
<feature type="active site" description="Nucleophile" evidence="1">
    <location>
        <position position="46"/>
    </location>
</feature>
<feature type="active site" description="Proton donor/acceptor" evidence="1">
    <location>
        <position position="287"/>
    </location>
</feature>
<feature type="binding site" evidence="1">
    <location>
        <position position="45"/>
    </location>
    <ligand>
        <name>sucrose</name>
        <dbReference type="ChEBI" id="CHEBI:17992"/>
    </ligand>
</feature>
<feature type="binding site" evidence="1">
    <location>
        <position position="46"/>
    </location>
    <ligand>
        <name>sucrose</name>
        <dbReference type="ChEBI" id="CHEBI:17992"/>
    </ligand>
</feature>
<feature type="binding site" evidence="1">
    <location>
        <position position="132"/>
    </location>
    <ligand>
        <name>sucrose</name>
        <dbReference type="ChEBI" id="CHEBI:17992"/>
    </ligand>
</feature>
<feature type="binding site" evidence="1">
    <location>
        <position position="202"/>
    </location>
    <ligand>
        <name>sucrose</name>
        <dbReference type="ChEBI" id="CHEBI:17992"/>
    </ligand>
</feature>
<feature type="binding site" evidence="1">
    <location>
        <position position="203"/>
    </location>
    <ligand>
        <name>sucrose</name>
        <dbReference type="ChEBI" id="CHEBI:17992"/>
    </ligand>
</feature>
<feature type="site" description="Transition state stabilizer" evidence="1">
    <location>
        <position position="203"/>
    </location>
</feature>
<reference key="1">
    <citation type="journal article" date="1998" name="Ann. N. Y. Acad. Sci.">
        <title>Levansucrase of Rahnella aquatilis ATCC33071. Gene cloning, expression, and levan formation.</title>
        <authorList>
            <person name="Song K.B."/>
            <person name="Seo J.W."/>
            <person name="Kim M.G."/>
            <person name="Rhee S.K."/>
        </authorList>
    </citation>
    <scope>NUCLEOTIDE SEQUENCE [GENOMIC DNA]</scope>
    <scope>FUNCTION</scope>
    <scope>CATALYTIC ACTIVITY</scope>
    <scope>BIOPHYSICOCHEMICAL PROPERTIES</scope>
    <source>
        <strain>ATCC 33071 / DSM 4594 / JCM 1683 / NBRC 105701 / NCIMB 13365 / CIP 78.65</strain>
    </source>
</reference>
<reference key="2">
    <citation type="submission" date="2012-01" db="EMBL/GenBank/DDBJ databases">
        <title>Complete sequence of plasmid 2 of Rahnella aquatilis CIP 78.65.</title>
        <authorList>
            <person name="Lucas S."/>
            <person name="Han J."/>
            <person name="Lapidus A."/>
            <person name="Cheng J.-F."/>
            <person name="Goodwin L."/>
            <person name="Pitluck S."/>
            <person name="Peters L."/>
            <person name="Ovchinnikova G."/>
            <person name="Held B."/>
            <person name="Detter J.C."/>
            <person name="Han C."/>
            <person name="Tapia R."/>
            <person name="Land M."/>
            <person name="Hauser L."/>
            <person name="Kyrpides N."/>
            <person name="Ivanova N."/>
            <person name="Pagani I."/>
            <person name="Sobecky P."/>
            <person name="Martinez R."/>
            <person name="Woyke T."/>
        </authorList>
    </citation>
    <scope>NUCLEOTIDE SEQUENCE [LARGE SCALE GENOMIC DNA]</scope>
    <source>
        <strain>ATCC 33071 / DSM 4594 / JCM 1683 / NBRC 105701 / NCIMB 13365 / CIP 78.65</strain>
        <plasmid>pRahaq202</plasmid>
    </source>
</reference>
<protein>
    <recommendedName>
        <fullName evidence="3">Levansucrase</fullName>
        <ecNumber evidence="2">2.4.1.10</ecNumber>
    </recommendedName>
    <alternativeName>
        <fullName>Beta-D-fructofuranosyl transferase</fullName>
    </alternativeName>
    <alternativeName>
        <fullName>Sucrose 6-fructosyl transferase</fullName>
    </alternativeName>
</protein>
<proteinExistence type="evidence at protein level"/>
<gene>
    <name evidence="3" type="primary">lsrA</name>
    <name evidence="5" type="ordered locus">Rahaq2_5035</name>
</gene>
<name>LSC_RAHAC</name>
<accession>O54435</accession>
<accession>H2J2C5</accession>
<comment type="function">
    <text evidence="2">Catalyzes the synthesis of levan, a fructose polymer, by transferring the fructosyl moiety from sucrose to a growing acceptor molecule.</text>
</comment>
<comment type="catalytic activity">
    <reaction evidence="2">
        <text>[6)-beta-D-fructofuranosyl-(2-&gt;](n) alpha-D-glucopyranoside + sucrose = [6)-beta-D-fructofuranosyl-(2-&gt;](n+1) alpha-D-glucopyranoside + D-glucose</text>
        <dbReference type="Rhea" id="RHEA:13653"/>
        <dbReference type="Rhea" id="RHEA-COMP:13093"/>
        <dbReference type="Rhea" id="RHEA-COMP:13094"/>
        <dbReference type="ChEBI" id="CHEBI:4167"/>
        <dbReference type="ChEBI" id="CHEBI:17992"/>
        <dbReference type="ChEBI" id="CHEBI:134464"/>
        <dbReference type="EC" id="2.4.1.10"/>
    </reaction>
</comment>
<comment type="biophysicochemical properties">
    <phDependence>
        <text evidence="2">Optimum pH is 4.0-6.0.</text>
    </phDependence>
    <temperatureDependence>
        <text evidence="2">Optimum temperature is 20 degrees Celsius.</text>
    </temperatureDependence>
</comment>
<comment type="similarity">
    <text evidence="4">Belongs to the glycosyl hydrolase 68 family.</text>
</comment>
<geneLocation type="plasmid">
    <name>pRahaq202</name>
</geneLocation>
<sequence length="415" mass="45939">MTNLNYTPTIWTRADALKVNENDPTTTQPIVDADFPVMSDEVFIWDTMPLRSLDGTVVSVDGWSVIFTLTAQRNNNNSEYLDAEGNYDITSDWNNRHGRARICYWYSRTGKDWIFGGRVMAEGVSPTSREWAGTPILLNEDGDIDLYYTCVTPGATIAKVRGKVLTSEEGVTLAGFNEVKSLFSADGVYYQTESQNPYWNFRDPSPFIDPHDGKLYMVFEGNVAGERGSHVIGKQEMGTLPPGHRDVGNARYQAGCIGMAVAKDLSGDEWEILPPLVTAVGVNDQTERPHFVFQDGKYYLFTISHKFTYADGLTGPDGVYGFLSDNLTGPYSPMNGSGLVLGNPPSQPFQTYSHCVMPNGLVTSFIDNVPTSDGNYRIGGTEAPTVKIVLKGNRSFVERVFDYGYIPPMKNIILN</sequence>